<dbReference type="EC" id="3.4.24.-"/>
<dbReference type="EMBL" id="CH476619">
    <property type="protein sequence ID" value="EEP82900.1"/>
    <property type="molecule type" value="Genomic_DNA"/>
</dbReference>
<dbReference type="RefSeq" id="XP_002582992.1">
    <property type="nucleotide sequence ID" value="XM_002582946.1"/>
</dbReference>
<dbReference type="SMR" id="C4K014"/>
<dbReference type="STRING" id="336963.C4K014"/>
<dbReference type="GeneID" id="8442292"/>
<dbReference type="KEGG" id="ure:UREG_07765"/>
<dbReference type="VEuPathDB" id="FungiDB:UREG_07765"/>
<dbReference type="eggNOG" id="ENOG502RYKG">
    <property type="taxonomic scope" value="Eukaryota"/>
</dbReference>
<dbReference type="HOGENOM" id="CLU_048726_0_0_1"/>
<dbReference type="InParanoid" id="C4K014"/>
<dbReference type="OMA" id="AMNQHYG"/>
<dbReference type="OrthoDB" id="536211at2759"/>
<dbReference type="Proteomes" id="UP000002058">
    <property type="component" value="Unassembled WGS sequence"/>
</dbReference>
<dbReference type="GO" id="GO:0005576">
    <property type="term" value="C:extracellular region"/>
    <property type="evidence" value="ECO:0007669"/>
    <property type="project" value="UniProtKB-SubCell"/>
</dbReference>
<dbReference type="GO" id="GO:0046872">
    <property type="term" value="F:metal ion binding"/>
    <property type="evidence" value="ECO:0007669"/>
    <property type="project" value="UniProtKB-KW"/>
</dbReference>
<dbReference type="GO" id="GO:0008237">
    <property type="term" value="F:metallopeptidase activity"/>
    <property type="evidence" value="ECO:0007669"/>
    <property type="project" value="UniProtKB-KW"/>
</dbReference>
<dbReference type="GO" id="GO:0006508">
    <property type="term" value="P:proteolysis"/>
    <property type="evidence" value="ECO:0007669"/>
    <property type="project" value="UniProtKB-KW"/>
</dbReference>
<dbReference type="CDD" id="cd04275">
    <property type="entry name" value="ZnMc_pappalysin_like"/>
    <property type="match status" value="1"/>
</dbReference>
<dbReference type="Gene3D" id="3.40.390.10">
    <property type="entry name" value="Collagenase (Catalytic Domain)"/>
    <property type="match status" value="1"/>
</dbReference>
<dbReference type="InterPro" id="IPR024079">
    <property type="entry name" value="MetalloPept_cat_dom_sf"/>
</dbReference>
<dbReference type="InterPro" id="IPR008754">
    <property type="entry name" value="Peptidase_M43"/>
</dbReference>
<dbReference type="PANTHER" id="PTHR47466">
    <property type="match status" value="1"/>
</dbReference>
<dbReference type="PANTHER" id="PTHR47466:SF1">
    <property type="entry name" value="METALLOPROTEASE MEP1 (AFU_ORTHOLOGUE AFUA_1G07730)-RELATED"/>
    <property type="match status" value="1"/>
</dbReference>
<dbReference type="Pfam" id="PF05572">
    <property type="entry name" value="Peptidase_M43"/>
    <property type="match status" value="1"/>
</dbReference>
<dbReference type="SUPFAM" id="SSF55486">
    <property type="entry name" value="Metalloproteases ('zincins'), catalytic domain"/>
    <property type="match status" value="1"/>
</dbReference>
<dbReference type="PROSITE" id="PS00142">
    <property type="entry name" value="ZINC_PROTEASE"/>
    <property type="match status" value="1"/>
</dbReference>
<proteinExistence type="inferred from homology"/>
<name>MEP1_UNCRE</name>
<feature type="signal peptide" evidence="2">
    <location>
        <begin position="1"/>
        <end position="18"/>
    </location>
</feature>
<feature type="chain" id="PRO_0000407206" description="Extracellular metalloprotease UREG_07765">
    <location>
        <begin position="19"/>
        <end position="269"/>
    </location>
</feature>
<feature type="region of interest" description="Disordered" evidence="4">
    <location>
        <begin position="207"/>
        <end position="227"/>
    </location>
</feature>
<feature type="compositionally biased region" description="Polar residues" evidence="4">
    <location>
        <begin position="210"/>
        <end position="225"/>
    </location>
</feature>
<feature type="active site" evidence="3">
    <location>
        <position position="192"/>
    </location>
</feature>
<feature type="binding site" evidence="3">
    <location>
        <position position="191"/>
    </location>
    <ligand>
        <name>Zn(2+)</name>
        <dbReference type="ChEBI" id="CHEBI:29105"/>
        <note>catalytic</note>
    </ligand>
</feature>
<feature type="binding site" evidence="3">
    <location>
        <position position="195"/>
    </location>
    <ligand>
        <name>Zn(2+)</name>
        <dbReference type="ChEBI" id="CHEBI:29105"/>
        <note>catalytic</note>
    </ligand>
</feature>
<feature type="glycosylation site" description="N-linked (GlcNAc...) asparagine" evidence="2">
    <location>
        <position position="179"/>
    </location>
</feature>
<feature type="disulfide bond" evidence="1">
    <location>
        <begin position="220"/>
        <end position="246"/>
    </location>
</feature>
<accession>C4K014</accession>
<reference key="1">
    <citation type="journal article" date="2009" name="Genome Res.">
        <title>Comparative genomic analyses of the human fungal pathogens Coccidioides and their relatives.</title>
        <authorList>
            <person name="Sharpton T.J."/>
            <person name="Stajich J.E."/>
            <person name="Rounsley S.D."/>
            <person name="Gardner M.J."/>
            <person name="Wortman J.R."/>
            <person name="Jordar V.S."/>
            <person name="Maiti R."/>
            <person name="Kodira C.D."/>
            <person name="Neafsey D.E."/>
            <person name="Zeng Q."/>
            <person name="Hung C.-Y."/>
            <person name="McMahan C."/>
            <person name="Muszewska A."/>
            <person name="Grynberg M."/>
            <person name="Mandel M.A."/>
            <person name="Kellner E.M."/>
            <person name="Barker B.M."/>
            <person name="Galgiani J.N."/>
            <person name="Orbach M.J."/>
            <person name="Kirkland T.N."/>
            <person name="Cole G.T."/>
            <person name="Henn M.R."/>
            <person name="Birren B.W."/>
            <person name="Taylor J.W."/>
        </authorList>
    </citation>
    <scope>NUCLEOTIDE SEQUENCE [LARGE SCALE GENOMIC DNA]</scope>
    <source>
        <strain>UAMH 1704</strain>
    </source>
</reference>
<organism>
    <name type="scientific">Uncinocarpus reesii (strain UAMH 1704)</name>
    <dbReference type="NCBI Taxonomy" id="336963"/>
    <lineage>
        <taxon>Eukaryota</taxon>
        <taxon>Fungi</taxon>
        <taxon>Dikarya</taxon>
        <taxon>Ascomycota</taxon>
        <taxon>Pezizomycotina</taxon>
        <taxon>Eurotiomycetes</taxon>
        <taxon>Eurotiomycetidae</taxon>
        <taxon>Onygenales</taxon>
        <taxon>Onygenaceae</taxon>
        <taxon>Uncinocarpus</taxon>
    </lineage>
</organism>
<sequence>MRLSVSLLALAFGSLVAAAPNTKPRTCGSKPSMEFLAKSAEFAAKEASGELLNSLATIEVETYFHVVASGRTPSQGYLSDAMLANQLRVMNSDYGPHGIQFNLVRTTRTVNANWARDGDELGMKRALRQGGYNALNVYFLGDLGSLLGYCYFPTNASPGSTAFIRDGCVVVGQSVPGGNISNYNLGKTATHEVGHWFGGCFGSGDGVSDTPPQRSSTQGCPSSRDSCPGGGVDPIHNYMDYSYDVCMNQFTSGQRTRIYNMWNQYRARG</sequence>
<evidence type="ECO:0000250" key="1"/>
<evidence type="ECO:0000255" key="2"/>
<evidence type="ECO:0000255" key="3">
    <source>
        <dbReference type="PROSITE-ProRule" id="PRU10095"/>
    </source>
</evidence>
<evidence type="ECO:0000256" key="4">
    <source>
        <dbReference type="SAM" id="MobiDB-lite"/>
    </source>
</evidence>
<evidence type="ECO:0000305" key="5"/>
<protein>
    <recommendedName>
        <fullName>Extracellular metalloprotease UREG_07765</fullName>
        <ecNumber>3.4.24.-</ecNumber>
    </recommendedName>
</protein>
<keyword id="KW-1015">Disulfide bond</keyword>
<keyword id="KW-0325">Glycoprotein</keyword>
<keyword id="KW-0378">Hydrolase</keyword>
<keyword id="KW-0479">Metal-binding</keyword>
<keyword id="KW-0482">Metalloprotease</keyword>
<keyword id="KW-0645">Protease</keyword>
<keyword id="KW-1185">Reference proteome</keyword>
<keyword id="KW-0964">Secreted</keyword>
<keyword id="KW-0732">Signal</keyword>
<keyword id="KW-0862">Zinc</keyword>
<comment type="function">
    <text evidence="1">Secreted metalloproteinase that allows assimilation of proteinaceous substrates.</text>
</comment>
<comment type="subcellular location">
    <subcellularLocation>
        <location evidence="1">Secreted</location>
    </subcellularLocation>
</comment>
<comment type="similarity">
    <text evidence="5">Belongs to the peptidase M43B family.</text>
</comment>
<gene>
    <name type="ORF">UREG_07765</name>
</gene>